<dbReference type="EC" id="6.3.2.4" evidence="2"/>
<dbReference type="EMBL" id="BA000019">
    <property type="protein sequence ID" value="BAB72937.1"/>
    <property type="molecule type" value="Genomic_DNA"/>
</dbReference>
<dbReference type="PIR" id="AI1928">
    <property type="entry name" value="AI1928"/>
</dbReference>
<dbReference type="SMR" id="Q8YY71"/>
<dbReference type="STRING" id="103690.gene:10492994"/>
<dbReference type="KEGG" id="ana:all0980"/>
<dbReference type="eggNOG" id="COG1181">
    <property type="taxonomic scope" value="Bacteria"/>
</dbReference>
<dbReference type="UniPathway" id="UPA00219"/>
<dbReference type="Proteomes" id="UP000002483">
    <property type="component" value="Chromosome"/>
</dbReference>
<dbReference type="GO" id="GO:0005829">
    <property type="term" value="C:cytosol"/>
    <property type="evidence" value="ECO:0007669"/>
    <property type="project" value="TreeGrafter"/>
</dbReference>
<dbReference type="GO" id="GO:0005524">
    <property type="term" value="F:ATP binding"/>
    <property type="evidence" value="ECO:0007669"/>
    <property type="project" value="UniProtKB-KW"/>
</dbReference>
<dbReference type="GO" id="GO:0008716">
    <property type="term" value="F:D-alanine-D-alanine ligase activity"/>
    <property type="evidence" value="ECO:0007669"/>
    <property type="project" value="UniProtKB-UniRule"/>
</dbReference>
<dbReference type="GO" id="GO:0046872">
    <property type="term" value="F:metal ion binding"/>
    <property type="evidence" value="ECO:0007669"/>
    <property type="project" value="UniProtKB-KW"/>
</dbReference>
<dbReference type="GO" id="GO:0071555">
    <property type="term" value="P:cell wall organization"/>
    <property type="evidence" value="ECO:0007669"/>
    <property type="project" value="UniProtKB-KW"/>
</dbReference>
<dbReference type="GO" id="GO:0009252">
    <property type="term" value="P:peptidoglycan biosynthetic process"/>
    <property type="evidence" value="ECO:0007669"/>
    <property type="project" value="UniProtKB-UniRule"/>
</dbReference>
<dbReference type="GO" id="GO:0008360">
    <property type="term" value="P:regulation of cell shape"/>
    <property type="evidence" value="ECO:0007669"/>
    <property type="project" value="UniProtKB-KW"/>
</dbReference>
<dbReference type="FunFam" id="3.30.1490.20:FF:000007">
    <property type="entry name" value="D-alanine--D-alanine ligase"/>
    <property type="match status" value="1"/>
</dbReference>
<dbReference type="FunFam" id="3.30.470.20:FF:000008">
    <property type="entry name" value="D-alanine--D-alanine ligase"/>
    <property type="match status" value="1"/>
</dbReference>
<dbReference type="Gene3D" id="3.40.50.20">
    <property type="match status" value="1"/>
</dbReference>
<dbReference type="Gene3D" id="3.30.1490.20">
    <property type="entry name" value="ATP-grasp fold, A domain"/>
    <property type="match status" value="1"/>
</dbReference>
<dbReference type="Gene3D" id="3.30.470.20">
    <property type="entry name" value="ATP-grasp fold, B domain"/>
    <property type="match status" value="1"/>
</dbReference>
<dbReference type="HAMAP" id="MF_00047">
    <property type="entry name" value="Dala_Dala_lig"/>
    <property type="match status" value="1"/>
</dbReference>
<dbReference type="InterPro" id="IPR011761">
    <property type="entry name" value="ATP-grasp"/>
</dbReference>
<dbReference type="InterPro" id="IPR013815">
    <property type="entry name" value="ATP_grasp_subdomain_1"/>
</dbReference>
<dbReference type="InterPro" id="IPR000291">
    <property type="entry name" value="D-Ala_lig_Van_CS"/>
</dbReference>
<dbReference type="InterPro" id="IPR005905">
    <property type="entry name" value="D_ala_D_ala"/>
</dbReference>
<dbReference type="InterPro" id="IPR011095">
    <property type="entry name" value="Dala_Dala_lig_C"/>
</dbReference>
<dbReference type="InterPro" id="IPR011127">
    <property type="entry name" value="Dala_Dala_lig_N"/>
</dbReference>
<dbReference type="InterPro" id="IPR016185">
    <property type="entry name" value="PreATP-grasp_dom_sf"/>
</dbReference>
<dbReference type="NCBIfam" id="TIGR01205">
    <property type="entry name" value="D_ala_D_alaTIGR"/>
    <property type="match status" value="1"/>
</dbReference>
<dbReference type="NCBIfam" id="NF002378">
    <property type="entry name" value="PRK01372.1"/>
    <property type="match status" value="1"/>
</dbReference>
<dbReference type="NCBIfam" id="NF002528">
    <property type="entry name" value="PRK01966.1-4"/>
    <property type="match status" value="1"/>
</dbReference>
<dbReference type="PANTHER" id="PTHR23132">
    <property type="entry name" value="D-ALANINE--D-ALANINE LIGASE"/>
    <property type="match status" value="1"/>
</dbReference>
<dbReference type="PANTHER" id="PTHR23132:SF25">
    <property type="entry name" value="D-ALANINE--D-ALANINE LIGASE A"/>
    <property type="match status" value="1"/>
</dbReference>
<dbReference type="Pfam" id="PF07478">
    <property type="entry name" value="Dala_Dala_lig_C"/>
    <property type="match status" value="1"/>
</dbReference>
<dbReference type="Pfam" id="PF01820">
    <property type="entry name" value="Dala_Dala_lig_N"/>
    <property type="match status" value="1"/>
</dbReference>
<dbReference type="PIRSF" id="PIRSF039102">
    <property type="entry name" value="Ddl/VanB"/>
    <property type="match status" value="1"/>
</dbReference>
<dbReference type="SUPFAM" id="SSF56059">
    <property type="entry name" value="Glutathione synthetase ATP-binding domain-like"/>
    <property type="match status" value="1"/>
</dbReference>
<dbReference type="SUPFAM" id="SSF52440">
    <property type="entry name" value="PreATP-grasp domain"/>
    <property type="match status" value="1"/>
</dbReference>
<dbReference type="PROSITE" id="PS50975">
    <property type="entry name" value="ATP_GRASP"/>
    <property type="match status" value="1"/>
</dbReference>
<dbReference type="PROSITE" id="PS00843">
    <property type="entry name" value="DALA_DALA_LIGASE_1"/>
    <property type="match status" value="1"/>
</dbReference>
<dbReference type="PROSITE" id="PS00844">
    <property type="entry name" value="DALA_DALA_LIGASE_2"/>
    <property type="match status" value="1"/>
</dbReference>
<name>DDL_NOSS1</name>
<reference key="1">
    <citation type="journal article" date="2001" name="DNA Res.">
        <title>Complete genomic sequence of the filamentous nitrogen-fixing cyanobacterium Anabaena sp. strain PCC 7120.</title>
        <authorList>
            <person name="Kaneko T."/>
            <person name="Nakamura Y."/>
            <person name="Wolk C.P."/>
            <person name="Kuritz T."/>
            <person name="Sasamoto S."/>
            <person name="Watanabe A."/>
            <person name="Iriguchi M."/>
            <person name="Ishikawa A."/>
            <person name="Kawashima K."/>
            <person name="Kimura T."/>
            <person name="Kishida Y."/>
            <person name="Kohara M."/>
            <person name="Matsumoto M."/>
            <person name="Matsuno A."/>
            <person name="Muraki A."/>
            <person name="Nakazaki N."/>
            <person name="Shimpo S."/>
            <person name="Sugimoto M."/>
            <person name="Takazawa M."/>
            <person name="Yamada M."/>
            <person name="Yasuda M."/>
            <person name="Tabata S."/>
        </authorList>
    </citation>
    <scope>NUCLEOTIDE SEQUENCE [LARGE SCALE GENOMIC DNA]</scope>
    <source>
        <strain>PCC 7120 / SAG 25.82 / UTEX 2576</strain>
    </source>
</reference>
<sequence length="364" mass="39427">MRVGLLFGGRSGEHEVSISSARAIASALSAGENASKYEILPFYIHKDGRWLAGEAPQQVLKSGAPLLESSNSSPAENNLVNSQQQTLERWQSPSQVAEVDVWFPILHGPNGEDGTIQGLLTLMQTPFVGSGVLGSALGMDKIAMKMAFEQAGLPQVKYKAVTRAQIWSNPCVFPKLCDEIEASLGYPCFVKPANLGSSVGISKVRSRQELEDALDNAANYDRRIIIEAGVAAREVECAVLGNDQPQASTVGEITFNSDFYDYETKYTAGKADLLIPAIIPDDISRQIQNMALQAFAAVDAAGLARVDFFYVEATGEVLINEINTLPGFTATSMYPQLWAHSGIPFPELVDKLVQLAIERHNPSH</sequence>
<evidence type="ECO:0000250" key="1"/>
<evidence type="ECO:0000255" key="2">
    <source>
        <dbReference type="HAMAP-Rule" id="MF_00047"/>
    </source>
</evidence>
<gene>
    <name evidence="2" type="primary">ddl</name>
    <name type="ordered locus">all0980</name>
</gene>
<comment type="function">
    <text evidence="2">Cell wall formation.</text>
</comment>
<comment type="catalytic activity">
    <reaction evidence="2">
        <text>2 D-alanine + ATP = D-alanyl-D-alanine + ADP + phosphate + H(+)</text>
        <dbReference type="Rhea" id="RHEA:11224"/>
        <dbReference type="ChEBI" id="CHEBI:15378"/>
        <dbReference type="ChEBI" id="CHEBI:30616"/>
        <dbReference type="ChEBI" id="CHEBI:43474"/>
        <dbReference type="ChEBI" id="CHEBI:57416"/>
        <dbReference type="ChEBI" id="CHEBI:57822"/>
        <dbReference type="ChEBI" id="CHEBI:456216"/>
        <dbReference type="EC" id="6.3.2.4"/>
    </reaction>
</comment>
<comment type="cofactor">
    <cofactor evidence="1">
        <name>Mg(2+)</name>
        <dbReference type="ChEBI" id="CHEBI:18420"/>
    </cofactor>
    <cofactor evidence="1">
        <name>Mn(2+)</name>
        <dbReference type="ChEBI" id="CHEBI:29035"/>
    </cofactor>
    <text evidence="1">Binds 2 magnesium or manganese ions per subunit.</text>
</comment>
<comment type="pathway">
    <text evidence="2">Cell wall biogenesis; peptidoglycan biosynthesis.</text>
</comment>
<comment type="subcellular location">
    <subcellularLocation>
        <location evidence="2">Cytoplasm</location>
    </subcellularLocation>
</comment>
<comment type="similarity">
    <text evidence="2">Belongs to the D-alanine--D-alanine ligase family.</text>
</comment>
<proteinExistence type="inferred from homology"/>
<keyword id="KW-0067">ATP-binding</keyword>
<keyword id="KW-0133">Cell shape</keyword>
<keyword id="KW-0961">Cell wall biogenesis/degradation</keyword>
<keyword id="KW-0963">Cytoplasm</keyword>
<keyword id="KW-0436">Ligase</keyword>
<keyword id="KW-0460">Magnesium</keyword>
<keyword id="KW-0464">Manganese</keyword>
<keyword id="KW-0479">Metal-binding</keyword>
<keyword id="KW-0547">Nucleotide-binding</keyword>
<keyword id="KW-0573">Peptidoglycan synthesis</keyword>
<keyword id="KW-1185">Reference proteome</keyword>
<protein>
    <recommendedName>
        <fullName evidence="2">D-alanine--D-alanine ligase</fullName>
        <ecNumber evidence="2">6.3.2.4</ecNumber>
    </recommendedName>
    <alternativeName>
        <fullName evidence="2">D-Ala-D-Ala ligase</fullName>
    </alternativeName>
    <alternativeName>
        <fullName evidence="2">D-alanylalanine synthetase</fullName>
    </alternativeName>
</protein>
<accession>Q8YY71</accession>
<organism>
    <name type="scientific">Nostoc sp. (strain PCC 7120 / SAG 25.82 / UTEX 2576)</name>
    <dbReference type="NCBI Taxonomy" id="103690"/>
    <lineage>
        <taxon>Bacteria</taxon>
        <taxon>Bacillati</taxon>
        <taxon>Cyanobacteriota</taxon>
        <taxon>Cyanophyceae</taxon>
        <taxon>Nostocales</taxon>
        <taxon>Nostocaceae</taxon>
        <taxon>Nostoc</taxon>
    </lineage>
</organism>
<feature type="chain" id="PRO_0000177779" description="D-alanine--D-alanine ligase">
    <location>
        <begin position="1"/>
        <end position="364"/>
    </location>
</feature>
<feature type="domain" description="ATP-grasp" evidence="2">
    <location>
        <begin position="145"/>
        <end position="354"/>
    </location>
</feature>
<feature type="binding site" evidence="2">
    <location>
        <begin position="181"/>
        <end position="236"/>
    </location>
    <ligand>
        <name>ATP</name>
        <dbReference type="ChEBI" id="CHEBI:30616"/>
    </ligand>
</feature>
<feature type="binding site" evidence="2">
    <location>
        <position position="307"/>
    </location>
    <ligand>
        <name>Mg(2+)</name>
        <dbReference type="ChEBI" id="CHEBI:18420"/>
        <label>1</label>
    </ligand>
</feature>
<feature type="binding site" evidence="2">
    <location>
        <position position="321"/>
    </location>
    <ligand>
        <name>Mg(2+)</name>
        <dbReference type="ChEBI" id="CHEBI:18420"/>
        <label>1</label>
    </ligand>
</feature>
<feature type="binding site" evidence="2">
    <location>
        <position position="321"/>
    </location>
    <ligand>
        <name>Mg(2+)</name>
        <dbReference type="ChEBI" id="CHEBI:18420"/>
        <label>2</label>
    </ligand>
</feature>
<feature type="binding site" evidence="2">
    <location>
        <position position="323"/>
    </location>
    <ligand>
        <name>Mg(2+)</name>
        <dbReference type="ChEBI" id="CHEBI:18420"/>
        <label>2</label>
    </ligand>
</feature>